<sequence>MKFALTGGGTGGHLSIAKALAIELEKQGIEAIYLGSTYGQDREWFENSPLFSERYFFNTQGVVNKSFFKKIGSLFLQAKAAFKAKEILKNHQITHTISVGGFSAGPASFASLLNKIPLYIHEQNAIKGSLNRYLSPKAKAVFSSYAFKDKGNHVLTSYPVQNAFFDCARTRTEIKHILFLGGSQGAKAINEFALLNAPKLTKQGIKITHICGSSAHERMRFFYQELGLLDKVELFAFHNNIIEVMHRADLCVSRAGASSVWELCANGLPTIFIPYPFASNNHQYYNVLEFEKENLCYVVPQNELLPKKLFEVIRKLNQKDDQGNKNLTTISTKLQQKIAKDGAKTIIETILNA</sequence>
<evidence type="ECO:0000255" key="1">
    <source>
        <dbReference type="HAMAP-Rule" id="MF_00033"/>
    </source>
</evidence>
<keyword id="KW-0131">Cell cycle</keyword>
<keyword id="KW-0132">Cell division</keyword>
<keyword id="KW-0997">Cell inner membrane</keyword>
<keyword id="KW-1003">Cell membrane</keyword>
<keyword id="KW-0133">Cell shape</keyword>
<keyword id="KW-0961">Cell wall biogenesis/degradation</keyword>
<keyword id="KW-0328">Glycosyltransferase</keyword>
<keyword id="KW-0472">Membrane</keyword>
<keyword id="KW-0573">Peptidoglycan synthesis</keyword>
<keyword id="KW-1185">Reference proteome</keyword>
<keyword id="KW-0808">Transferase</keyword>
<feature type="chain" id="PRO_1000090439" description="UDP-N-acetylglucosamine--N-acetylmuramyl-(pentapeptide) pyrophosphoryl-undecaprenol N-acetylglucosamine transferase">
    <location>
        <begin position="1"/>
        <end position="353"/>
    </location>
</feature>
<feature type="binding site" evidence="1">
    <location>
        <begin position="10"/>
        <end position="12"/>
    </location>
    <ligand>
        <name>UDP-N-acetyl-alpha-D-glucosamine</name>
        <dbReference type="ChEBI" id="CHEBI:57705"/>
    </ligand>
</feature>
<feature type="binding site" evidence="1">
    <location>
        <position position="124"/>
    </location>
    <ligand>
        <name>UDP-N-acetyl-alpha-D-glucosamine</name>
        <dbReference type="ChEBI" id="CHEBI:57705"/>
    </ligand>
</feature>
<feature type="binding site" evidence="1">
    <location>
        <position position="183"/>
    </location>
    <ligand>
        <name>UDP-N-acetyl-alpha-D-glucosamine</name>
        <dbReference type="ChEBI" id="CHEBI:57705"/>
    </ligand>
</feature>
<feature type="binding site" evidence="1">
    <location>
        <position position="283"/>
    </location>
    <ligand>
        <name>UDP-N-acetyl-alpha-D-glucosamine</name>
        <dbReference type="ChEBI" id="CHEBI:57705"/>
    </ligand>
</feature>
<reference key="1">
    <citation type="journal article" date="2009" name="J. Bacteriol.">
        <title>The complete genome sequence of Helicobacter pylori strain G27.</title>
        <authorList>
            <person name="Baltrus D.A."/>
            <person name="Amieva M.R."/>
            <person name="Covacci A."/>
            <person name="Lowe T.M."/>
            <person name="Merrell D.S."/>
            <person name="Ottemann K.M."/>
            <person name="Stein M."/>
            <person name="Salama N.R."/>
            <person name="Guillemin K."/>
        </authorList>
    </citation>
    <scope>NUCLEOTIDE SEQUENCE [LARGE SCALE GENOMIC DNA]</scope>
    <source>
        <strain>G27</strain>
    </source>
</reference>
<comment type="function">
    <text evidence="1">Cell wall formation. Catalyzes the transfer of a GlcNAc subunit on undecaprenyl-pyrophosphoryl-MurNAc-pentapeptide (lipid intermediate I) to form undecaprenyl-pyrophosphoryl-MurNAc-(pentapeptide)GlcNAc (lipid intermediate II).</text>
</comment>
<comment type="catalytic activity">
    <reaction evidence="1">
        <text>di-trans,octa-cis-undecaprenyl diphospho-N-acetyl-alpha-D-muramoyl-L-alanyl-D-glutamyl-meso-2,6-diaminopimeloyl-D-alanyl-D-alanine + UDP-N-acetyl-alpha-D-glucosamine = di-trans,octa-cis-undecaprenyl diphospho-[N-acetyl-alpha-D-glucosaminyl-(1-&gt;4)]-N-acetyl-alpha-D-muramoyl-L-alanyl-D-glutamyl-meso-2,6-diaminopimeloyl-D-alanyl-D-alanine + UDP + H(+)</text>
        <dbReference type="Rhea" id="RHEA:31227"/>
        <dbReference type="ChEBI" id="CHEBI:15378"/>
        <dbReference type="ChEBI" id="CHEBI:57705"/>
        <dbReference type="ChEBI" id="CHEBI:58223"/>
        <dbReference type="ChEBI" id="CHEBI:61387"/>
        <dbReference type="ChEBI" id="CHEBI:61388"/>
        <dbReference type="EC" id="2.4.1.227"/>
    </reaction>
</comment>
<comment type="pathway">
    <text evidence="1">Cell wall biogenesis; peptidoglycan biosynthesis.</text>
</comment>
<comment type="subcellular location">
    <subcellularLocation>
        <location evidence="1">Cell inner membrane</location>
        <topology evidence="1">Peripheral membrane protein</topology>
        <orientation evidence="1">Cytoplasmic side</orientation>
    </subcellularLocation>
</comment>
<comment type="similarity">
    <text evidence="1">Belongs to the glycosyltransferase 28 family. MurG subfamily.</text>
</comment>
<protein>
    <recommendedName>
        <fullName evidence="1">UDP-N-acetylglucosamine--N-acetylmuramyl-(pentapeptide) pyrophosphoryl-undecaprenol N-acetylglucosamine transferase</fullName>
        <ecNumber evidence="1">2.4.1.227</ecNumber>
    </recommendedName>
    <alternativeName>
        <fullName evidence="1">Undecaprenyl-PP-MurNAc-pentapeptide-UDPGlcNAc GlcNAc transferase</fullName>
    </alternativeName>
</protein>
<name>MURG_HELPG</name>
<organism>
    <name type="scientific">Helicobacter pylori (strain G27)</name>
    <dbReference type="NCBI Taxonomy" id="563041"/>
    <lineage>
        <taxon>Bacteria</taxon>
        <taxon>Pseudomonadati</taxon>
        <taxon>Campylobacterota</taxon>
        <taxon>Epsilonproteobacteria</taxon>
        <taxon>Campylobacterales</taxon>
        <taxon>Helicobacteraceae</taxon>
        <taxon>Helicobacter</taxon>
    </lineage>
</organism>
<dbReference type="EC" id="2.4.1.227" evidence="1"/>
<dbReference type="EMBL" id="CP001173">
    <property type="protein sequence ID" value="ACI27850.1"/>
    <property type="molecule type" value="Genomic_DNA"/>
</dbReference>
<dbReference type="RefSeq" id="WP_000666660.1">
    <property type="nucleotide sequence ID" value="NC_011333.1"/>
</dbReference>
<dbReference type="SMR" id="B5Z8F1"/>
<dbReference type="CAZy" id="GT28">
    <property type="family name" value="Glycosyltransferase Family 28"/>
</dbReference>
<dbReference type="KEGG" id="hpg:HPG27_1099"/>
<dbReference type="HOGENOM" id="CLU_037404_2_1_7"/>
<dbReference type="UniPathway" id="UPA00219"/>
<dbReference type="Proteomes" id="UP000001735">
    <property type="component" value="Chromosome"/>
</dbReference>
<dbReference type="GO" id="GO:0005886">
    <property type="term" value="C:plasma membrane"/>
    <property type="evidence" value="ECO:0007669"/>
    <property type="project" value="UniProtKB-SubCell"/>
</dbReference>
<dbReference type="GO" id="GO:0051991">
    <property type="term" value="F:UDP-N-acetyl-D-glucosamine:N-acetylmuramoyl-L-alanyl-D-glutamyl-meso-2,6-diaminopimelyl-D-alanyl-D-alanine-diphosphoundecaprenol 4-beta-N-acetylglucosaminlytransferase activity"/>
    <property type="evidence" value="ECO:0007669"/>
    <property type="project" value="RHEA"/>
</dbReference>
<dbReference type="GO" id="GO:0050511">
    <property type="term" value="F:undecaprenyldiphospho-muramoylpentapeptide beta-N-acetylglucosaminyltransferase activity"/>
    <property type="evidence" value="ECO:0007669"/>
    <property type="project" value="UniProtKB-UniRule"/>
</dbReference>
<dbReference type="GO" id="GO:0005975">
    <property type="term" value="P:carbohydrate metabolic process"/>
    <property type="evidence" value="ECO:0007669"/>
    <property type="project" value="InterPro"/>
</dbReference>
<dbReference type="GO" id="GO:0051301">
    <property type="term" value="P:cell division"/>
    <property type="evidence" value="ECO:0007669"/>
    <property type="project" value="UniProtKB-KW"/>
</dbReference>
<dbReference type="GO" id="GO:0071555">
    <property type="term" value="P:cell wall organization"/>
    <property type="evidence" value="ECO:0007669"/>
    <property type="project" value="UniProtKB-KW"/>
</dbReference>
<dbReference type="GO" id="GO:0030259">
    <property type="term" value="P:lipid glycosylation"/>
    <property type="evidence" value="ECO:0007669"/>
    <property type="project" value="UniProtKB-UniRule"/>
</dbReference>
<dbReference type="GO" id="GO:0009252">
    <property type="term" value="P:peptidoglycan biosynthetic process"/>
    <property type="evidence" value="ECO:0007669"/>
    <property type="project" value="UniProtKB-UniRule"/>
</dbReference>
<dbReference type="GO" id="GO:0008360">
    <property type="term" value="P:regulation of cell shape"/>
    <property type="evidence" value="ECO:0007669"/>
    <property type="project" value="UniProtKB-KW"/>
</dbReference>
<dbReference type="CDD" id="cd03785">
    <property type="entry name" value="GT28_MurG"/>
    <property type="match status" value="1"/>
</dbReference>
<dbReference type="Gene3D" id="3.40.50.2000">
    <property type="entry name" value="Glycogen Phosphorylase B"/>
    <property type="match status" value="2"/>
</dbReference>
<dbReference type="HAMAP" id="MF_00033">
    <property type="entry name" value="MurG"/>
    <property type="match status" value="1"/>
</dbReference>
<dbReference type="InterPro" id="IPR006009">
    <property type="entry name" value="GlcNAc_MurG"/>
</dbReference>
<dbReference type="InterPro" id="IPR007235">
    <property type="entry name" value="Glyco_trans_28_C"/>
</dbReference>
<dbReference type="InterPro" id="IPR004276">
    <property type="entry name" value="GlycoTrans_28_N"/>
</dbReference>
<dbReference type="NCBIfam" id="TIGR01133">
    <property type="entry name" value="murG"/>
    <property type="match status" value="1"/>
</dbReference>
<dbReference type="PANTHER" id="PTHR21015:SF22">
    <property type="entry name" value="GLYCOSYLTRANSFERASE"/>
    <property type="match status" value="1"/>
</dbReference>
<dbReference type="PANTHER" id="PTHR21015">
    <property type="entry name" value="UDP-N-ACETYLGLUCOSAMINE--N-ACETYLMURAMYL-(PENTAPEPTIDE) PYROPHOSPHORYL-UNDECAPRENOL N-ACETYLGLUCOSAMINE TRANSFERASE 1"/>
    <property type="match status" value="1"/>
</dbReference>
<dbReference type="Pfam" id="PF04101">
    <property type="entry name" value="Glyco_tran_28_C"/>
    <property type="match status" value="1"/>
</dbReference>
<dbReference type="Pfam" id="PF03033">
    <property type="entry name" value="Glyco_transf_28"/>
    <property type="match status" value="1"/>
</dbReference>
<dbReference type="SUPFAM" id="SSF53756">
    <property type="entry name" value="UDP-Glycosyltransferase/glycogen phosphorylase"/>
    <property type="match status" value="1"/>
</dbReference>
<gene>
    <name evidence="1" type="primary">murG</name>
    <name type="ordered locus">HPG27_1099</name>
</gene>
<proteinExistence type="inferred from homology"/>
<accession>B5Z8F1</accession>